<accession>Q6ZPK0</accession>
<accession>A2AHG2</accession>
<accession>Q6XVG0</accession>
<accession>Q80Z33</accession>
<accession>Q8CAZ4</accession>
<accession>Q8VEC8</accession>
<sequence length="688" mass="75597">MELQTLQEALKVEIQVHQKLVAQMKQDPQNADLKKQLHELQAKITALSEKQKRVVEQLRKNLIVKQEQPDKFQIQPLSQSENKLQTAQQQPLQPLQQQQPQQPQQQQQQQQQHAQQSAAAPPSLTASQKTVTTASMITTKTLPLVLKAATATMPASVVGQRPTIAMVTAINSQKAVLSTDVQNTPVNLQTSSKVTGPGAEAVQIVAKNTVTLQVQATPPQPIKVPQFIPPPRLTPRPNFLPQVRPKPVAQNNIPIAPAPPPMLAAPQLIQRPVMLTKFTPTTLPTSQNSIHPVRVVNGQTATIAKTFPMAQLTSIVIATPGTRLAGPQTVQLSKPSLEKQTVKSHPEAEEKQAESRTVTPPAAPKPKREENPQKLAFMVSLGLVTHDHLEEIQSKRQERKRRTTANPVYSGAVFEPERKKSAVTYLNSTMHPGTRKRGRPPKYNAVLGFGALTPTSPPSSHPDSPENEKTETTFTFPAPVQPVSLPSPTSTDGDIHEDFCSVCRKSGQLLMCDTCSRVYHLDCLEPPLKTIPKGMWICPRCQDQMLKKEEAIPWPGTLAIVHSYIAYKAAKEEEKQKLLKWSSDLKQEREQLEQKVKELSSSISKCMEMKSSILARQKEMRSSLDKVKRLIRLVHGVDLCRPVDSEATAGALSNGPDCTPPANAASTPAPSPSSQSCTANCNQGEETK</sequence>
<protein>
    <recommendedName>
        <fullName evidence="7">PHD finger protein 21A</fullName>
    </recommendedName>
    <alternativeName>
        <fullName>BHC80a</fullName>
    </alternativeName>
    <alternativeName>
        <fullName>BRAF35-HDAC complex protein BHC80</fullName>
        <shortName>mBHC80</shortName>
    </alternativeName>
</protein>
<evidence type="ECO:0000250" key="1"/>
<evidence type="ECO:0000250" key="2">
    <source>
        <dbReference type="UniProtKB" id="Q96BD5"/>
    </source>
</evidence>
<evidence type="ECO:0000255" key="3"/>
<evidence type="ECO:0000255" key="4">
    <source>
        <dbReference type="PROSITE-ProRule" id="PRU00146"/>
    </source>
</evidence>
<evidence type="ECO:0000256" key="5">
    <source>
        <dbReference type="SAM" id="MobiDB-lite"/>
    </source>
</evidence>
<evidence type="ECO:0000269" key="6">
    <source>
    </source>
</evidence>
<evidence type="ECO:0000305" key="7"/>
<evidence type="ECO:0000312" key="8">
    <source>
        <dbReference type="MGI" id="MGI:2384756"/>
    </source>
</evidence>
<name>PF21A_MOUSE</name>
<feature type="chain" id="PRO_0000226768" description="PHD finger protein 21A">
    <location>
        <begin position="1"/>
        <end position="688"/>
    </location>
</feature>
<feature type="DNA-binding region" description="A.T hook" evidence="1">
    <location>
        <begin position="434"/>
        <end position="446"/>
    </location>
</feature>
<feature type="zinc finger region" description="PHD-type" evidence="4">
    <location>
        <begin position="497"/>
        <end position="544"/>
    </location>
</feature>
<feature type="region of interest" description="Disordered" evidence="5">
    <location>
        <begin position="78"/>
        <end position="127"/>
    </location>
</feature>
<feature type="region of interest" description="Disordered" evidence="5">
    <location>
        <begin position="327"/>
        <end position="373"/>
    </location>
</feature>
<feature type="region of interest" description="Disordered" evidence="5">
    <location>
        <begin position="449"/>
        <end position="471"/>
    </location>
</feature>
<feature type="region of interest" description="Disordered" evidence="5">
    <location>
        <begin position="650"/>
        <end position="688"/>
    </location>
</feature>
<feature type="coiled-coil region" evidence="3">
    <location>
        <begin position="571"/>
        <end position="609"/>
    </location>
</feature>
<feature type="compositionally biased region" description="Low complexity" evidence="5">
    <location>
        <begin position="85"/>
        <end position="127"/>
    </location>
</feature>
<feature type="compositionally biased region" description="Basic and acidic residues" evidence="5">
    <location>
        <begin position="336"/>
        <end position="354"/>
    </location>
</feature>
<feature type="compositionally biased region" description="Low complexity" evidence="5">
    <location>
        <begin position="660"/>
        <end position="679"/>
    </location>
</feature>
<feature type="modified residue" description="Phosphothreonine" evidence="2">
    <location>
        <position position="453"/>
    </location>
</feature>
<feature type="modified residue" description="Phosphoserine" evidence="2">
    <location>
        <position position="456"/>
    </location>
</feature>
<feature type="cross-link" description="Glycyl lysine isopeptide (Lys-Gly) (interchain with G-Cter in SUMO2)" evidence="2">
    <location>
        <position position="65"/>
    </location>
</feature>
<feature type="splice variant" id="VSP_060156" description="In isoform 4, isoform 5, isoform 7 and isoform 9.">
    <location>
        <begin position="129"/>
        <end position="213"/>
    </location>
</feature>
<feature type="splice variant" id="VSP_060157" description="In isoform 2.">
    <location>
        <begin position="129"/>
        <end position="212"/>
    </location>
</feature>
<feature type="splice variant" id="VSP_060158" description="In isoform 3, isoform 6 and isoform 8.">
    <location>
        <position position="129"/>
    </location>
</feature>
<feature type="splice variant" id="VSP_060159" description="In isoform 3, isoform 5, isoform 6, isoform 7, isoform 9 and isoform 8.">
    <location>
        <begin position="341"/>
        <end position="381"/>
    </location>
</feature>
<feature type="splice variant" id="VSP_060160" description="In isoform 6, isoform 5 and isoform 4.">
    <original>GRPPKYNAVLGFGALTPTSPPSSHPDSPENEKTETTFTFPAPVQPVSLPSPTSTD</original>
    <variation>ANEEHWPK</variation>
    <location>
        <begin position="438"/>
        <end position="492"/>
    </location>
</feature>
<feature type="splice variant" id="VSP_060161" description="In isoform 7 and isoform 8.">
    <original>GRPPKYNAVLGFGALTPTSPPSSHPDSPENEKTETTFTFPAPVQ</original>
    <variation>ANEEHWPK</variation>
    <location>
        <begin position="438"/>
        <end position="481"/>
    </location>
</feature>
<feature type="sequence conflict" description="In Ref. 1; BAC65327 and 3; BAC29735." evidence="7" ref="1 3">
    <original>A</original>
    <variation>P</variation>
    <location>
        <position position="325"/>
    </location>
</feature>
<feature type="sequence conflict" description="In Ref. 2; BAC98234." evidence="7" ref="2">
    <location>
        <position position="341"/>
    </location>
</feature>
<feature type="sequence conflict" description="In Ref. 1; BAC65327." evidence="7" ref="1">
    <original>A</original>
    <variation>T</variation>
    <location>
        <position position="669"/>
    </location>
</feature>
<reference key="1">
    <citation type="journal article" date="2004" name="Biochem. Biophys. Res. Commun.">
        <title>Characterization of BHC80 in BRAF-HDAC complex, involved in neuron-specific gene repression.</title>
        <authorList>
            <person name="Iwase S."/>
            <person name="Januma A."/>
            <person name="Miyamoto K."/>
            <person name="Shono N."/>
            <person name="Honda A."/>
            <person name="Yanagisawa J."/>
            <person name="Baba T."/>
        </authorList>
    </citation>
    <scope>NUCLEOTIDE SEQUENCE [LARGE SCALE MRNA] (ISOFORMS 3; 4; 5; 6; 7; 8 AND 9)</scope>
    <scope>SUBCELLULAR LOCATION</scope>
    <scope>TISSUE SPECIFICITY</scope>
    <source>
        <tissue>Brain</tissue>
    </source>
</reference>
<reference key="2">
    <citation type="journal article" date="2003" name="DNA Res.">
        <title>Prediction of the coding sequences of mouse homologues of KIAA gene: III. The complete nucleotide sequences of 500 mouse KIAA-homologous cDNAs identified by screening of terminal sequences of cDNA clones randomly sampled from size-fractionated libraries.</title>
        <authorList>
            <person name="Okazaki N."/>
            <person name="Kikuno R."/>
            <person name="Ohara R."/>
            <person name="Inamoto S."/>
            <person name="Koseki H."/>
            <person name="Hiraoka S."/>
            <person name="Saga Y."/>
            <person name="Nagase T."/>
            <person name="Ohara O."/>
            <person name="Koga H."/>
        </authorList>
    </citation>
    <scope>NUCLEOTIDE SEQUENCE [LARGE SCALE MRNA] (ISOFORM 1)</scope>
    <source>
        <tissue>Embryonic tail</tissue>
    </source>
</reference>
<reference key="3">
    <citation type="journal article" date="2005" name="Science">
        <title>The transcriptional landscape of the mammalian genome.</title>
        <authorList>
            <person name="Carninci P."/>
            <person name="Kasukawa T."/>
            <person name="Katayama S."/>
            <person name="Gough J."/>
            <person name="Frith M.C."/>
            <person name="Maeda N."/>
            <person name="Oyama R."/>
            <person name="Ravasi T."/>
            <person name="Lenhard B."/>
            <person name="Wells C."/>
            <person name="Kodzius R."/>
            <person name="Shimokawa K."/>
            <person name="Bajic V.B."/>
            <person name="Brenner S.E."/>
            <person name="Batalov S."/>
            <person name="Forrest A.R."/>
            <person name="Zavolan M."/>
            <person name="Davis M.J."/>
            <person name="Wilming L.G."/>
            <person name="Aidinis V."/>
            <person name="Allen J.E."/>
            <person name="Ambesi-Impiombato A."/>
            <person name="Apweiler R."/>
            <person name="Aturaliya R.N."/>
            <person name="Bailey T.L."/>
            <person name="Bansal M."/>
            <person name="Baxter L."/>
            <person name="Beisel K.W."/>
            <person name="Bersano T."/>
            <person name="Bono H."/>
            <person name="Chalk A.M."/>
            <person name="Chiu K.P."/>
            <person name="Choudhary V."/>
            <person name="Christoffels A."/>
            <person name="Clutterbuck D.R."/>
            <person name="Crowe M.L."/>
            <person name="Dalla E."/>
            <person name="Dalrymple B.P."/>
            <person name="de Bono B."/>
            <person name="Della Gatta G."/>
            <person name="di Bernardo D."/>
            <person name="Down T."/>
            <person name="Engstrom P."/>
            <person name="Fagiolini M."/>
            <person name="Faulkner G."/>
            <person name="Fletcher C.F."/>
            <person name="Fukushima T."/>
            <person name="Furuno M."/>
            <person name="Futaki S."/>
            <person name="Gariboldi M."/>
            <person name="Georgii-Hemming P."/>
            <person name="Gingeras T.R."/>
            <person name="Gojobori T."/>
            <person name="Green R.E."/>
            <person name="Gustincich S."/>
            <person name="Harbers M."/>
            <person name="Hayashi Y."/>
            <person name="Hensch T.K."/>
            <person name="Hirokawa N."/>
            <person name="Hill D."/>
            <person name="Huminiecki L."/>
            <person name="Iacono M."/>
            <person name="Ikeo K."/>
            <person name="Iwama A."/>
            <person name="Ishikawa T."/>
            <person name="Jakt M."/>
            <person name="Kanapin A."/>
            <person name="Katoh M."/>
            <person name="Kawasawa Y."/>
            <person name="Kelso J."/>
            <person name="Kitamura H."/>
            <person name="Kitano H."/>
            <person name="Kollias G."/>
            <person name="Krishnan S.P."/>
            <person name="Kruger A."/>
            <person name="Kummerfeld S.K."/>
            <person name="Kurochkin I.V."/>
            <person name="Lareau L.F."/>
            <person name="Lazarevic D."/>
            <person name="Lipovich L."/>
            <person name="Liu J."/>
            <person name="Liuni S."/>
            <person name="McWilliam S."/>
            <person name="Madan Babu M."/>
            <person name="Madera M."/>
            <person name="Marchionni L."/>
            <person name="Matsuda H."/>
            <person name="Matsuzawa S."/>
            <person name="Miki H."/>
            <person name="Mignone F."/>
            <person name="Miyake S."/>
            <person name="Morris K."/>
            <person name="Mottagui-Tabar S."/>
            <person name="Mulder N."/>
            <person name="Nakano N."/>
            <person name="Nakauchi H."/>
            <person name="Ng P."/>
            <person name="Nilsson R."/>
            <person name="Nishiguchi S."/>
            <person name="Nishikawa S."/>
            <person name="Nori F."/>
            <person name="Ohara O."/>
            <person name="Okazaki Y."/>
            <person name="Orlando V."/>
            <person name="Pang K.C."/>
            <person name="Pavan W.J."/>
            <person name="Pavesi G."/>
            <person name="Pesole G."/>
            <person name="Petrovsky N."/>
            <person name="Piazza S."/>
            <person name="Reed J."/>
            <person name="Reid J.F."/>
            <person name="Ring B.Z."/>
            <person name="Ringwald M."/>
            <person name="Rost B."/>
            <person name="Ruan Y."/>
            <person name="Salzberg S.L."/>
            <person name="Sandelin A."/>
            <person name="Schneider C."/>
            <person name="Schoenbach C."/>
            <person name="Sekiguchi K."/>
            <person name="Semple C.A."/>
            <person name="Seno S."/>
            <person name="Sessa L."/>
            <person name="Sheng Y."/>
            <person name="Shibata Y."/>
            <person name="Shimada H."/>
            <person name="Shimada K."/>
            <person name="Silva D."/>
            <person name="Sinclair B."/>
            <person name="Sperling S."/>
            <person name="Stupka E."/>
            <person name="Sugiura K."/>
            <person name="Sultana R."/>
            <person name="Takenaka Y."/>
            <person name="Taki K."/>
            <person name="Tammoja K."/>
            <person name="Tan S.L."/>
            <person name="Tang S."/>
            <person name="Taylor M.S."/>
            <person name="Tegner J."/>
            <person name="Teichmann S.A."/>
            <person name="Ueda H.R."/>
            <person name="van Nimwegen E."/>
            <person name="Verardo R."/>
            <person name="Wei C.L."/>
            <person name="Yagi K."/>
            <person name="Yamanishi H."/>
            <person name="Zabarovsky E."/>
            <person name="Zhu S."/>
            <person name="Zimmer A."/>
            <person name="Hide W."/>
            <person name="Bult C."/>
            <person name="Grimmond S.M."/>
            <person name="Teasdale R.D."/>
            <person name="Liu E.T."/>
            <person name="Brusic V."/>
            <person name="Quackenbush J."/>
            <person name="Wahlestedt C."/>
            <person name="Mattick J.S."/>
            <person name="Hume D.A."/>
            <person name="Kai C."/>
            <person name="Sasaki D."/>
            <person name="Tomaru Y."/>
            <person name="Fukuda S."/>
            <person name="Kanamori-Katayama M."/>
            <person name="Suzuki M."/>
            <person name="Aoki J."/>
            <person name="Arakawa T."/>
            <person name="Iida J."/>
            <person name="Imamura K."/>
            <person name="Itoh M."/>
            <person name="Kato T."/>
            <person name="Kawaji H."/>
            <person name="Kawagashira N."/>
            <person name="Kawashima T."/>
            <person name="Kojima M."/>
            <person name="Kondo S."/>
            <person name="Konno H."/>
            <person name="Nakano K."/>
            <person name="Ninomiya N."/>
            <person name="Nishio T."/>
            <person name="Okada M."/>
            <person name="Plessy C."/>
            <person name="Shibata K."/>
            <person name="Shiraki T."/>
            <person name="Suzuki S."/>
            <person name="Tagami M."/>
            <person name="Waki K."/>
            <person name="Watahiki A."/>
            <person name="Okamura-Oho Y."/>
            <person name="Suzuki H."/>
            <person name="Kawai J."/>
            <person name="Hayashizaki Y."/>
        </authorList>
    </citation>
    <scope>NUCLEOTIDE SEQUENCE [LARGE SCALE MRNA] (ISOFORM 2)</scope>
    <source>
        <strain>C57BL/6J</strain>
        <tissue>Skin</tissue>
    </source>
</reference>
<reference key="4">
    <citation type="journal article" date="2009" name="PLoS Biol.">
        <title>Lineage-specific biology revealed by a finished genome assembly of the mouse.</title>
        <authorList>
            <person name="Church D.M."/>
            <person name="Goodstadt L."/>
            <person name="Hillier L.W."/>
            <person name="Zody M.C."/>
            <person name="Goldstein S."/>
            <person name="She X."/>
            <person name="Bult C.J."/>
            <person name="Agarwala R."/>
            <person name="Cherry J.L."/>
            <person name="DiCuccio M."/>
            <person name="Hlavina W."/>
            <person name="Kapustin Y."/>
            <person name="Meric P."/>
            <person name="Maglott D."/>
            <person name="Birtle Z."/>
            <person name="Marques A.C."/>
            <person name="Graves T."/>
            <person name="Zhou S."/>
            <person name="Teague B."/>
            <person name="Potamousis K."/>
            <person name="Churas C."/>
            <person name="Place M."/>
            <person name="Herschleb J."/>
            <person name="Runnheim R."/>
            <person name="Forrest D."/>
            <person name="Amos-Landgraf J."/>
            <person name="Schwartz D.C."/>
            <person name="Cheng Z."/>
            <person name="Lindblad-Toh K."/>
            <person name="Eichler E.E."/>
            <person name="Ponting C.P."/>
        </authorList>
    </citation>
    <scope>NUCLEOTIDE SEQUENCE [LARGE SCALE GENOMIC DNA]</scope>
    <source>
        <strain>C57BL/6J</strain>
    </source>
</reference>
<reference key="5">
    <citation type="journal article" date="2004" name="Genome Res.">
        <title>The status, quality, and expansion of the NIH full-length cDNA project: the Mammalian Gene Collection (MGC).</title>
        <authorList>
            <consortium name="The MGC Project Team"/>
        </authorList>
    </citation>
    <scope>NUCLEOTIDE SEQUENCE [LARGE SCALE MRNA] (ISOFORM 4)</scope>
    <source>
        <strain>FVB/N-3</strain>
        <tissue>Mammary tumor</tissue>
    </source>
</reference>
<reference key="6">
    <citation type="submission" date="2002-12" db="EMBL/GenBank/DDBJ databases">
        <title>Mouse ovary and testis gene cohorts and RNA and protein developmental markers from microarray expression profiling.</title>
        <authorList>
            <person name="Herrera L."/>
            <person name="Ottolenghi C."/>
            <person name="Forabosco A."/>
            <person name="Schlessinger D."/>
        </authorList>
    </citation>
    <scope>NUCLEOTIDE SEQUENCE [MRNA] OF 119-303 (ISOFORMS 3/6/8)</scope>
    <source>
        <strain>C57BL/6J</strain>
    </source>
</reference>
<keyword id="KW-0025">Alternative splicing</keyword>
<keyword id="KW-0156">Chromatin regulator</keyword>
<keyword id="KW-0175">Coiled coil</keyword>
<keyword id="KW-0238">DNA-binding</keyword>
<keyword id="KW-1017">Isopeptide bond</keyword>
<keyword id="KW-0479">Metal-binding</keyword>
<keyword id="KW-0539">Nucleus</keyword>
<keyword id="KW-0597">Phosphoprotein</keyword>
<keyword id="KW-1185">Reference proteome</keyword>
<keyword id="KW-0678">Repressor</keyword>
<keyword id="KW-0804">Transcription</keyword>
<keyword id="KW-0805">Transcription regulation</keyword>
<keyword id="KW-0832">Ubl conjugation</keyword>
<keyword id="KW-0862">Zinc</keyword>
<keyword id="KW-0863">Zinc-finger</keyword>
<gene>
    <name evidence="8" type="primary">Phf21a</name>
    <name type="synonym">Bhc80</name>
    <name type="synonym">Kiaa1696</name>
    <name type="synonym">Pftf1</name>
</gene>
<organism>
    <name type="scientific">Mus musculus</name>
    <name type="common">Mouse</name>
    <dbReference type="NCBI Taxonomy" id="10090"/>
    <lineage>
        <taxon>Eukaryota</taxon>
        <taxon>Metazoa</taxon>
        <taxon>Chordata</taxon>
        <taxon>Craniata</taxon>
        <taxon>Vertebrata</taxon>
        <taxon>Euteleostomi</taxon>
        <taxon>Mammalia</taxon>
        <taxon>Eutheria</taxon>
        <taxon>Euarchontoglires</taxon>
        <taxon>Glires</taxon>
        <taxon>Rodentia</taxon>
        <taxon>Myomorpha</taxon>
        <taxon>Muroidea</taxon>
        <taxon>Muridae</taxon>
        <taxon>Murinae</taxon>
        <taxon>Mus</taxon>
        <taxon>Mus</taxon>
    </lineage>
</organism>
<comment type="function">
    <text evidence="1">Component of the BHC complex, a corepressor complex that represses transcription of neuron-specific genes in non-neuronal cells. The BHC complex is recruited at RE1/NRSE sites by REST and acts by deacetylating and demethylating specific sites on histones, thereby acting as a chromatin modifier. In the BHC complex, it may act as a scaffold. Inhibits KDM1A-mediated demethylation of 'Lys-4' of histone H3 in vitro, suggesting a role in demethylation regulation (By similarity).</text>
</comment>
<comment type="subunit">
    <text evidence="1">Component of a BHC histone deacetylase complex that contains HDAC1, HDAC2, HMG20B/BRAF35, KDM1A, RCOR1/CoREST and PHF21A/BHC80. The BHC complex may also contain ZMYM2, ZNF217, ZMYM3, GSE1 and GTF2I. In the complex, it interacts directly with HDAC1, HDAC2, HMG20B/BRAF35, KDM1A and RCOR1/CoREST (By similarity).</text>
</comment>
<comment type="subcellular location">
    <subcellularLocation>
        <location evidence="6">Nucleus</location>
    </subcellularLocation>
</comment>
<comment type="alternative products">
    <event type="alternative splicing"/>
    <isoform>
        <id>Q6ZPK0-10</id>
        <name>1</name>
        <sequence type="displayed"/>
    </isoform>
    <isoform>
        <id>Q6ZPK0-2</id>
        <name>2</name>
        <sequence type="described" ref="VSP_060157"/>
    </isoform>
    <isoform>
        <id>Q6ZPK0-3</id>
        <name>3</name>
        <name>BHC80-6(AIF2+5)</name>
        <sequence type="described" ref="VSP_060158 VSP_060159"/>
    </isoform>
    <isoform>
        <id>Q6ZPK0-4</id>
        <name>4</name>
        <sequence type="described" ref="VSP_060156 VSP_060160"/>
    </isoform>
    <isoform>
        <id>Q6ZPK0-5</id>
        <name>5</name>
        <name>BHC80-1(AIF1+3)</name>
        <sequence type="described" ref="VSP_060156 VSP_060159 VSP_060160"/>
    </isoform>
    <isoform>
        <id>Q6ZPK0-6</id>
        <name>6</name>
        <name>BHC80-4(AIF2+3)</name>
        <sequence type="described" ref="VSP_060158 VSP_060159 VSP_060160"/>
    </isoform>
    <isoform>
        <id>Q6ZPK0-7</id>
        <name>7</name>
        <name>BHC80-2(AIF1+4)</name>
        <sequence type="described" ref="VSP_060156 VSP_060159 VSP_060161"/>
    </isoform>
    <isoform>
        <id>Q6ZPK0-8</id>
        <name>8</name>
        <name>BHC80-5(AIF2+4)</name>
        <sequence type="described" ref="VSP_060158 VSP_060159 VSP_060161"/>
    </isoform>
    <isoform>
        <id>Q6ZPK0-9</id>
        <name>9</name>
        <name>BHC80-3(AIF1+5)</name>
        <sequence type="described" ref="VSP_060156 VSP_060159"/>
    </isoform>
</comment>
<comment type="tissue specificity">
    <text evidence="6">Expressed in the brain and testis. Weakly or not expressed in other tissues tested. Localized throughout the central nervous system (CNS) in brain, including the cerebellum, hippocampus, and cortex. Notably present in neuronal cells of granular cell layer and dentate gyrus in cerebellum and hippocampus, respectively. In the seminiferous tubules, the signals it is present strongly in spermatocytes, and weakly in spermatogonia and round spermatids. In some cases, it is also observed solely in spermatocytes (at protein level).</text>
</comment>
<comment type="sequence caution" evidence="7">
    <conflict type="frameshift">
        <sequence resource="EMBL-CDS" id="BAC98234"/>
    </conflict>
</comment>
<proteinExistence type="evidence at protein level"/>
<dbReference type="EMBL" id="AB105178">
    <property type="protein sequence ID" value="BAC65327.1"/>
    <property type="molecule type" value="mRNA"/>
</dbReference>
<dbReference type="EMBL" id="AK129424">
    <property type="protein sequence ID" value="BAC98234.1"/>
    <property type="status" value="ALT_FRAME"/>
    <property type="molecule type" value="Transcribed_RNA"/>
</dbReference>
<dbReference type="EMBL" id="AK037174">
    <property type="protein sequence ID" value="BAC29735.1"/>
    <property type="molecule type" value="mRNA"/>
</dbReference>
<dbReference type="EMBL" id="AL691462">
    <property type="status" value="NOT_ANNOTATED_CDS"/>
    <property type="molecule type" value="Genomic_DNA"/>
</dbReference>
<dbReference type="EMBL" id="AL731709">
    <property type="status" value="NOT_ANNOTATED_CDS"/>
    <property type="molecule type" value="Genomic_DNA"/>
</dbReference>
<dbReference type="EMBL" id="AL732484">
    <property type="status" value="NOT_ANNOTATED_CDS"/>
    <property type="molecule type" value="Genomic_DNA"/>
</dbReference>
<dbReference type="EMBL" id="BC019181">
    <property type="protein sequence ID" value="AAH19181.1"/>
    <property type="molecule type" value="mRNA"/>
</dbReference>
<dbReference type="EMBL" id="AY206982">
    <property type="protein sequence ID" value="AAP43962.1"/>
    <property type="molecule type" value="mRNA"/>
</dbReference>
<dbReference type="CCDS" id="CCDS16442.1">
    <molecule id="Q6ZPK0-4"/>
</dbReference>
<dbReference type="CCDS" id="CCDS50644.1">
    <molecule id="Q6ZPK0-10"/>
</dbReference>
<dbReference type="CCDS" id="CCDS50645.1">
    <molecule id="Q6ZPK0-2"/>
</dbReference>
<dbReference type="RefSeq" id="NP_001103161.1">
    <property type="nucleotide sequence ID" value="NM_001109691.1"/>
</dbReference>
<dbReference type="RefSeq" id="NP_620094.2">
    <property type="nucleotide sequence ID" value="NM_138755.2"/>
</dbReference>
<dbReference type="RefSeq" id="XP_006499043.1">
    <property type="nucleotide sequence ID" value="XM_006498980.3"/>
</dbReference>
<dbReference type="RefSeq" id="XP_017172037.1">
    <property type="nucleotide sequence ID" value="XM_017316548.1"/>
</dbReference>
<dbReference type="BMRB" id="Q6ZPK0"/>
<dbReference type="SMR" id="Q6ZPK0"/>
<dbReference type="BioGRID" id="228685">
    <property type="interactions" value="4"/>
</dbReference>
<dbReference type="FunCoup" id="Q6ZPK0">
    <property type="interactions" value="1405"/>
</dbReference>
<dbReference type="STRING" id="10090.ENSMUSP00000088074"/>
<dbReference type="GlyGen" id="Q6ZPK0">
    <property type="glycosylation" value="10 sites, 1 O-linked glycan (8 sites)"/>
</dbReference>
<dbReference type="iPTMnet" id="Q6ZPK0"/>
<dbReference type="PhosphoSitePlus" id="Q6ZPK0"/>
<dbReference type="jPOST" id="Q6ZPK0"/>
<dbReference type="PaxDb" id="10090-ENSMUSP00000088074"/>
<dbReference type="PeptideAtlas" id="Q6ZPK0"/>
<dbReference type="ProteomicsDB" id="287676">
    <molecule id="Q6ZPK0-10"/>
</dbReference>
<dbReference type="ProteomicsDB" id="287677">
    <molecule id="Q6ZPK0-2"/>
</dbReference>
<dbReference type="ProteomicsDB" id="287678">
    <molecule id="Q6ZPK0-3"/>
</dbReference>
<dbReference type="ProteomicsDB" id="287679">
    <molecule id="Q6ZPK0-4"/>
</dbReference>
<dbReference type="ProteomicsDB" id="287680">
    <molecule id="Q6ZPK0-5"/>
</dbReference>
<dbReference type="ProteomicsDB" id="287681">
    <molecule id="Q6ZPK0-6"/>
</dbReference>
<dbReference type="ProteomicsDB" id="287682">
    <molecule id="Q6ZPK0-7"/>
</dbReference>
<dbReference type="ProteomicsDB" id="287683">
    <molecule id="Q6ZPK0-8"/>
</dbReference>
<dbReference type="ProteomicsDB" id="287684">
    <molecule id="Q6ZPK0-9"/>
</dbReference>
<dbReference type="ProteomicsDB" id="329183"/>
<dbReference type="Pumba" id="Q6ZPK0"/>
<dbReference type="DNASU" id="192285"/>
<dbReference type="GeneID" id="192285"/>
<dbReference type="KEGG" id="mmu:192285"/>
<dbReference type="UCSC" id="uc008kxl.2">
    <property type="organism name" value="mouse"/>
</dbReference>
<dbReference type="AGR" id="MGI:2384756"/>
<dbReference type="CTD" id="51317"/>
<dbReference type="MGI" id="MGI:2384756">
    <property type="gene designation" value="Phf21a"/>
</dbReference>
<dbReference type="eggNOG" id="KOG0383">
    <property type="taxonomic scope" value="Eukaryota"/>
</dbReference>
<dbReference type="InParanoid" id="Q6ZPK0"/>
<dbReference type="OrthoDB" id="336088at2759"/>
<dbReference type="TreeFam" id="TF331518"/>
<dbReference type="Reactome" id="R-MMU-3214815">
    <property type="pathway name" value="HDACs deacetylate histones"/>
</dbReference>
<dbReference type="Reactome" id="R-MMU-983231">
    <property type="pathway name" value="Factors involved in megakaryocyte development and platelet production"/>
</dbReference>
<dbReference type="BioGRID-ORCS" id="192285">
    <property type="hits" value="3 hits in 117 CRISPR screens"/>
</dbReference>
<dbReference type="ChiTaRS" id="Phf21a">
    <property type="organism name" value="mouse"/>
</dbReference>
<dbReference type="PRO" id="PR:Q6ZPK0"/>
<dbReference type="Proteomes" id="UP000000589">
    <property type="component" value="Unplaced"/>
</dbReference>
<dbReference type="RNAct" id="Q6ZPK0">
    <property type="molecule type" value="protein"/>
</dbReference>
<dbReference type="GO" id="GO:1990391">
    <property type="term" value="C:DNA repair complex"/>
    <property type="evidence" value="ECO:0000266"/>
    <property type="project" value="MGI"/>
</dbReference>
<dbReference type="GO" id="GO:0000118">
    <property type="term" value="C:histone deacetylase complex"/>
    <property type="evidence" value="ECO:0000266"/>
    <property type="project" value="MGI"/>
</dbReference>
<dbReference type="GO" id="GO:0001673">
    <property type="term" value="C:male germ cell nucleus"/>
    <property type="evidence" value="ECO:0000314"/>
    <property type="project" value="MGI"/>
</dbReference>
<dbReference type="GO" id="GO:0005634">
    <property type="term" value="C:nucleus"/>
    <property type="evidence" value="ECO:0000314"/>
    <property type="project" value="MGI"/>
</dbReference>
<dbReference type="GO" id="GO:0003682">
    <property type="term" value="F:chromatin binding"/>
    <property type="evidence" value="ECO:0000314"/>
    <property type="project" value="MGI"/>
</dbReference>
<dbReference type="GO" id="GO:0003677">
    <property type="term" value="F:DNA binding"/>
    <property type="evidence" value="ECO:0007669"/>
    <property type="project" value="UniProtKB-KW"/>
</dbReference>
<dbReference type="GO" id="GO:0008270">
    <property type="term" value="F:zinc ion binding"/>
    <property type="evidence" value="ECO:0007669"/>
    <property type="project" value="UniProtKB-KW"/>
</dbReference>
<dbReference type="GO" id="GO:0006325">
    <property type="term" value="P:chromatin organization"/>
    <property type="evidence" value="ECO:0007669"/>
    <property type="project" value="UniProtKB-KW"/>
</dbReference>
<dbReference type="GO" id="GO:0000122">
    <property type="term" value="P:negative regulation of transcription by RNA polymerase II"/>
    <property type="evidence" value="ECO:0000266"/>
    <property type="project" value="MGI"/>
</dbReference>
<dbReference type="GO" id="GO:0001967">
    <property type="term" value="P:suckling behavior"/>
    <property type="evidence" value="ECO:0000315"/>
    <property type="project" value="MGI"/>
</dbReference>
<dbReference type="CDD" id="cd15523">
    <property type="entry name" value="PHD_PHF21A"/>
    <property type="match status" value="1"/>
</dbReference>
<dbReference type="FunFam" id="3.30.40.10:FF:000001">
    <property type="entry name" value="chromodomain-helicase-DNA-binding protein 3 isoform X1"/>
    <property type="match status" value="1"/>
</dbReference>
<dbReference type="Gene3D" id="3.30.40.10">
    <property type="entry name" value="Zinc/RING finger domain, C3HC4 (zinc finger)"/>
    <property type="match status" value="1"/>
</dbReference>
<dbReference type="InterPro" id="IPR019786">
    <property type="entry name" value="Zinc_finger_PHD-type_CS"/>
</dbReference>
<dbReference type="InterPro" id="IPR011011">
    <property type="entry name" value="Znf_FYVE_PHD"/>
</dbReference>
<dbReference type="InterPro" id="IPR001965">
    <property type="entry name" value="Znf_PHD"/>
</dbReference>
<dbReference type="InterPro" id="IPR019787">
    <property type="entry name" value="Znf_PHD-finger"/>
</dbReference>
<dbReference type="InterPro" id="IPR013083">
    <property type="entry name" value="Znf_RING/FYVE/PHD"/>
</dbReference>
<dbReference type="PANTHER" id="PTHR24102">
    <property type="entry name" value="PHD FINGER PROTEIN"/>
    <property type="match status" value="1"/>
</dbReference>
<dbReference type="PANTHER" id="PTHR24102:SF6">
    <property type="entry name" value="PHD FINGER PROTEIN 21A"/>
    <property type="match status" value="1"/>
</dbReference>
<dbReference type="Pfam" id="PF00628">
    <property type="entry name" value="PHD"/>
    <property type="match status" value="1"/>
</dbReference>
<dbReference type="SMART" id="SM00249">
    <property type="entry name" value="PHD"/>
    <property type="match status" value="1"/>
</dbReference>
<dbReference type="SUPFAM" id="SSF57903">
    <property type="entry name" value="FYVE/PHD zinc finger"/>
    <property type="match status" value="1"/>
</dbReference>
<dbReference type="PROSITE" id="PS01359">
    <property type="entry name" value="ZF_PHD_1"/>
    <property type="match status" value="1"/>
</dbReference>
<dbReference type="PROSITE" id="PS50016">
    <property type="entry name" value="ZF_PHD_2"/>
    <property type="match status" value="1"/>
</dbReference>